<proteinExistence type="inferred from homology"/>
<keyword id="KW-0067">ATP-binding</keyword>
<keyword id="KW-0963">Cytoplasm</keyword>
<keyword id="KW-0235">DNA replication</keyword>
<keyword id="KW-0238">DNA-binding</keyword>
<keyword id="KW-0446">Lipid-binding</keyword>
<keyword id="KW-0547">Nucleotide-binding</keyword>
<keyword id="KW-1185">Reference proteome</keyword>
<name>DNAA_JANSC</name>
<evidence type="ECO:0000255" key="1">
    <source>
        <dbReference type="HAMAP-Rule" id="MF_00377"/>
    </source>
</evidence>
<evidence type="ECO:0000256" key="2">
    <source>
        <dbReference type="SAM" id="MobiDB-lite"/>
    </source>
</evidence>
<sequence length="475" mass="53129">MTNDTWNEVRQDLLKVVGKNNFSAWIEPIDFDRIDERTAHFHVPTNFIGSWVTNNFGDLILRQLSAHGAGADRVKFTVSPKAGAAVAAPANTSAPRPVPEMAAAAPAPAPVHHTAPAPAPVAAPAQPRELPGAKLNPNFTFANFVVGKPNELAHAAARRVAETLDVTFNPLFLYGGVGLGKTHLMHAIAWDLQDRHPDAKILFLSAEQFMHRFVRALREQDTFNFKETFRSVDILMVDDVQFIAGKTSTQQEFFHTFNALVEMGKQIVISGDRAPVDMEELDNRIASRLQCGLVVDIHPTDYELRLGVLQHKAELLGAKYPHITFATGVLEYLAQKISSNVRVLEGALTRLFAFADLVRREVTVDLAKECLTDVLRATDKKVTMDEILKKTCEYYKIRQVDMISQNRQRVIARPRQMAMYLCKRLTTRSLPEIGKKFGGRDHTTILYGVRKIEELMQADSQIAEDAELLRRTLEA</sequence>
<dbReference type="EMBL" id="CP000264">
    <property type="protein sequence ID" value="ABD52918.1"/>
    <property type="molecule type" value="Genomic_DNA"/>
</dbReference>
<dbReference type="RefSeq" id="WP_011453127.1">
    <property type="nucleotide sequence ID" value="NC_007802.1"/>
</dbReference>
<dbReference type="SMR" id="Q28WI0"/>
<dbReference type="STRING" id="290400.Jann_0001"/>
<dbReference type="KEGG" id="jan:Jann_0001"/>
<dbReference type="eggNOG" id="COG0593">
    <property type="taxonomic scope" value="Bacteria"/>
</dbReference>
<dbReference type="HOGENOM" id="CLU_026910_3_1_5"/>
<dbReference type="OrthoDB" id="9807019at2"/>
<dbReference type="Proteomes" id="UP000008326">
    <property type="component" value="Chromosome"/>
</dbReference>
<dbReference type="GO" id="GO:0005737">
    <property type="term" value="C:cytoplasm"/>
    <property type="evidence" value="ECO:0007669"/>
    <property type="project" value="UniProtKB-SubCell"/>
</dbReference>
<dbReference type="GO" id="GO:0005886">
    <property type="term" value="C:plasma membrane"/>
    <property type="evidence" value="ECO:0007669"/>
    <property type="project" value="TreeGrafter"/>
</dbReference>
<dbReference type="GO" id="GO:0005524">
    <property type="term" value="F:ATP binding"/>
    <property type="evidence" value="ECO:0007669"/>
    <property type="project" value="UniProtKB-UniRule"/>
</dbReference>
<dbReference type="GO" id="GO:0016887">
    <property type="term" value="F:ATP hydrolysis activity"/>
    <property type="evidence" value="ECO:0007669"/>
    <property type="project" value="InterPro"/>
</dbReference>
<dbReference type="GO" id="GO:0003688">
    <property type="term" value="F:DNA replication origin binding"/>
    <property type="evidence" value="ECO:0007669"/>
    <property type="project" value="UniProtKB-UniRule"/>
</dbReference>
<dbReference type="GO" id="GO:0008289">
    <property type="term" value="F:lipid binding"/>
    <property type="evidence" value="ECO:0007669"/>
    <property type="project" value="UniProtKB-KW"/>
</dbReference>
<dbReference type="GO" id="GO:0006270">
    <property type="term" value="P:DNA replication initiation"/>
    <property type="evidence" value="ECO:0007669"/>
    <property type="project" value="UniProtKB-UniRule"/>
</dbReference>
<dbReference type="GO" id="GO:0006275">
    <property type="term" value="P:regulation of DNA replication"/>
    <property type="evidence" value="ECO:0007669"/>
    <property type="project" value="UniProtKB-UniRule"/>
</dbReference>
<dbReference type="CDD" id="cd00009">
    <property type="entry name" value="AAA"/>
    <property type="match status" value="1"/>
</dbReference>
<dbReference type="CDD" id="cd06571">
    <property type="entry name" value="Bac_DnaA_C"/>
    <property type="match status" value="1"/>
</dbReference>
<dbReference type="FunFam" id="3.40.50.300:FF:000668">
    <property type="entry name" value="Chromosomal replication initiator protein DnaA"/>
    <property type="match status" value="1"/>
</dbReference>
<dbReference type="Gene3D" id="1.10.1750.10">
    <property type="match status" value="1"/>
</dbReference>
<dbReference type="Gene3D" id="1.10.8.60">
    <property type="match status" value="1"/>
</dbReference>
<dbReference type="Gene3D" id="3.30.300.180">
    <property type="match status" value="1"/>
</dbReference>
<dbReference type="Gene3D" id="3.40.50.300">
    <property type="entry name" value="P-loop containing nucleotide triphosphate hydrolases"/>
    <property type="match status" value="1"/>
</dbReference>
<dbReference type="HAMAP" id="MF_00377">
    <property type="entry name" value="DnaA_bact"/>
    <property type="match status" value="1"/>
</dbReference>
<dbReference type="InterPro" id="IPR003593">
    <property type="entry name" value="AAA+_ATPase"/>
</dbReference>
<dbReference type="InterPro" id="IPR001957">
    <property type="entry name" value="Chromosome_initiator_DnaA"/>
</dbReference>
<dbReference type="InterPro" id="IPR020591">
    <property type="entry name" value="Chromosome_initiator_DnaA-like"/>
</dbReference>
<dbReference type="InterPro" id="IPR018312">
    <property type="entry name" value="Chromosome_initiator_DnaA_CS"/>
</dbReference>
<dbReference type="InterPro" id="IPR013159">
    <property type="entry name" value="DnaA_C"/>
</dbReference>
<dbReference type="InterPro" id="IPR013317">
    <property type="entry name" value="DnaA_dom"/>
</dbReference>
<dbReference type="InterPro" id="IPR024633">
    <property type="entry name" value="DnaA_N_dom"/>
</dbReference>
<dbReference type="InterPro" id="IPR038454">
    <property type="entry name" value="DnaA_N_sf"/>
</dbReference>
<dbReference type="InterPro" id="IPR027417">
    <property type="entry name" value="P-loop_NTPase"/>
</dbReference>
<dbReference type="InterPro" id="IPR010921">
    <property type="entry name" value="Trp_repressor/repl_initiator"/>
</dbReference>
<dbReference type="NCBIfam" id="TIGR00362">
    <property type="entry name" value="DnaA"/>
    <property type="match status" value="1"/>
</dbReference>
<dbReference type="PANTHER" id="PTHR30050">
    <property type="entry name" value="CHROMOSOMAL REPLICATION INITIATOR PROTEIN DNAA"/>
    <property type="match status" value="1"/>
</dbReference>
<dbReference type="PANTHER" id="PTHR30050:SF2">
    <property type="entry name" value="CHROMOSOMAL REPLICATION INITIATOR PROTEIN DNAA"/>
    <property type="match status" value="1"/>
</dbReference>
<dbReference type="Pfam" id="PF00308">
    <property type="entry name" value="Bac_DnaA"/>
    <property type="match status" value="1"/>
</dbReference>
<dbReference type="Pfam" id="PF08299">
    <property type="entry name" value="Bac_DnaA_C"/>
    <property type="match status" value="1"/>
</dbReference>
<dbReference type="Pfam" id="PF11638">
    <property type="entry name" value="DnaA_N"/>
    <property type="match status" value="1"/>
</dbReference>
<dbReference type="PRINTS" id="PR00051">
    <property type="entry name" value="DNAA"/>
</dbReference>
<dbReference type="SMART" id="SM00382">
    <property type="entry name" value="AAA"/>
    <property type="match status" value="1"/>
</dbReference>
<dbReference type="SMART" id="SM00760">
    <property type="entry name" value="Bac_DnaA_C"/>
    <property type="match status" value="1"/>
</dbReference>
<dbReference type="SUPFAM" id="SSF52540">
    <property type="entry name" value="P-loop containing nucleoside triphosphate hydrolases"/>
    <property type="match status" value="1"/>
</dbReference>
<dbReference type="SUPFAM" id="SSF48295">
    <property type="entry name" value="TrpR-like"/>
    <property type="match status" value="1"/>
</dbReference>
<dbReference type="PROSITE" id="PS01008">
    <property type="entry name" value="DNAA"/>
    <property type="match status" value="1"/>
</dbReference>
<comment type="function">
    <text evidence="1">Plays an essential role in the initiation and regulation of chromosomal replication. ATP-DnaA binds to the origin of replication (oriC) to initiate formation of the DNA replication initiation complex once per cell cycle. Binds the DnaA box (a 9 base pair repeat at the origin) and separates the double-stranded (ds)DNA. Forms a right-handed helical filament on oriC DNA; dsDNA binds to the exterior of the filament while single-stranded (ss)DNA is stabiized in the filament's interior. The ATP-DnaA-oriC complex binds and stabilizes one strand of the AT-rich DNA unwinding element (DUE), permitting loading of DNA polymerase. After initiation quickly degrades to an ADP-DnaA complex that is not apt for DNA replication. Binds acidic phospholipids.</text>
</comment>
<comment type="subunit">
    <text evidence="1">Oligomerizes as a right-handed, spiral filament on DNA at oriC.</text>
</comment>
<comment type="subcellular location">
    <subcellularLocation>
        <location evidence="1">Cytoplasm</location>
    </subcellularLocation>
</comment>
<comment type="domain">
    <text evidence="1">Domain I is involved in oligomerization and binding regulators, domain II is flexibile and of varying length in different bacteria, domain III forms the AAA+ region, while domain IV binds dsDNA.</text>
</comment>
<comment type="similarity">
    <text evidence="1">Belongs to the DnaA family.</text>
</comment>
<reference key="1">
    <citation type="submission" date="2006-02" db="EMBL/GenBank/DDBJ databases">
        <title>Complete sequence of chromosome of Jannaschia sp. CCS1.</title>
        <authorList>
            <consortium name="US DOE Joint Genome Institute"/>
            <person name="Copeland A."/>
            <person name="Lucas S."/>
            <person name="Lapidus A."/>
            <person name="Barry K."/>
            <person name="Detter J.C."/>
            <person name="Glavina del Rio T."/>
            <person name="Hammon N."/>
            <person name="Israni S."/>
            <person name="Pitluck S."/>
            <person name="Brettin T."/>
            <person name="Bruce D."/>
            <person name="Han C."/>
            <person name="Tapia R."/>
            <person name="Gilna P."/>
            <person name="Chertkov O."/>
            <person name="Saunders E."/>
            <person name="Schmutz J."/>
            <person name="Larimer F."/>
            <person name="Land M."/>
            <person name="Kyrpides N."/>
            <person name="Lykidis A."/>
            <person name="Moran M.A."/>
            <person name="Belas R."/>
            <person name="Ye W."/>
            <person name="Buchan A."/>
            <person name="Gonzalez J.M."/>
            <person name="Schell M.A."/>
            <person name="Richardson P."/>
        </authorList>
    </citation>
    <scope>NUCLEOTIDE SEQUENCE [LARGE SCALE GENOMIC DNA]</scope>
    <source>
        <strain>CCS1</strain>
    </source>
</reference>
<feature type="chain" id="PRO_1000048658" description="Chromosomal replication initiator protein DnaA">
    <location>
        <begin position="1"/>
        <end position="475"/>
    </location>
</feature>
<feature type="region of interest" description="Domain I, interacts with DnaA modulators" evidence="1">
    <location>
        <begin position="1"/>
        <end position="71"/>
    </location>
</feature>
<feature type="region of interest" description="Domain II" evidence="1">
    <location>
        <begin position="71"/>
        <end position="133"/>
    </location>
</feature>
<feature type="region of interest" description="Disordered" evidence="2">
    <location>
        <begin position="107"/>
        <end position="129"/>
    </location>
</feature>
<feature type="region of interest" description="Domain III, AAA+ region" evidence="1">
    <location>
        <begin position="134"/>
        <end position="355"/>
    </location>
</feature>
<feature type="region of interest" description="Domain IV, binds dsDNA" evidence="1">
    <location>
        <begin position="356"/>
        <end position="475"/>
    </location>
</feature>
<feature type="compositionally biased region" description="Low complexity" evidence="2">
    <location>
        <begin position="107"/>
        <end position="127"/>
    </location>
</feature>
<feature type="binding site" evidence="1">
    <location>
        <position position="178"/>
    </location>
    <ligand>
        <name>ATP</name>
        <dbReference type="ChEBI" id="CHEBI:30616"/>
    </ligand>
</feature>
<feature type="binding site" evidence="1">
    <location>
        <position position="180"/>
    </location>
    <ligand>
        <name>ATP</name>
        <dbReference type="ChEBI" id="CHEBI:30616"/>
    </ligand>
</feature>
<feature type="binding site" evidence="1">
    <location>
        <position position="181"/>
    </location>
    <ligand>
        <name>ATP</name>
        <dbReference type="ChEBI" id="CHEBI:30616"/>
    </ligand>
</feature>
<feature type="binding site" evidence="1">
    <location>
        <position position="182"/>
    </location>
    <ligand>
        <name>ATP</name>
        <dbReference type="ChEBI" id="CHEBI:30616"/>
    </ligand>
</feature>
<accession>Q28WI0</accession>
<gene>
    <name evidence="1" type="primary">dnaA</name>
    <name type="ordered locus">Jann_0001</name>
</gene>
<organism>
    <name type="scientific">Jannaschia sp. (strain CCS1)</name>
    <dbReference type="NCBI Taxonomy" id="290400"/>
    <lineage>
        <taxon>Bacteria</taxon>
        <taxon>Pseudomonadati</taxon>
        <taxon>Pseudomonadota</taxon>
        <taxon>Alphaproteobacteria</taxon>
        <taxon>Rhodobacterales</taxon>
        <taxon>Roseobacteraceae</taxon>
        <taxon>Jannaschia</taxon>
    </lineage>
</organism>
<protein>
    <recommendedName>
        <fullName evidence="1">Chromosomal replication initiator protein DnaA</fullName>
    </recommendedName>
</protein>